<dbReference type="EMBL" id="AE000516">
    <property type="protein sequence ID" value="AAK46366.1"/>
    <property type="molecule type" value="Genomic_DNA"/>
</dbReference>
<dbReference type="PIR" id="C70942">
    <property type="entry name" value="C70942"/>
</dbReference>
<dbReference type="RefSeq" id="WP_003410171.1">
    <property type="nucleotide sequence ID" value="NZ_KK341227.1"/>
</dbReference>
<dbReference type="SMR" id="P9WFD8"/>
<dbReference type="KEGG" id="mtc:MT2087"/>
<dbReference type="PATRIC" id="fig|83331.31.peg.2251"/>
<dbReference type="HOGENOM" id="CLU_049301_2_3_11"/>
<dbReference type="Proteomes" id="UP000001020">
    <property type="component" value="Chromosome"/>
</dbReference>
<dbReference type="Gene3D" id="3.40.50.620">
    <property type="entry name" value="HUPs"/>
    <property type="match status" value="2"/>
</dbReference>
<dbReference type="InterPro" id="IPR014729">
    <property type="entry name" value="Rossmann-like_a/b/a_fold"/>
</dbReference>
<dbReference type="InterPro" id="IPR006015">
    <property type="entry name" value="Universal_stress_UspA"/>
</dbReference>
<dbReference type="InterPro" id="IPR006016">
    <property type="entry name" value="UspA"/>
</dbReference>
<dbReference type="PANTHER" id="PTHR46268">
    <property type="entry name" value="STRESS RESPONSE PROTEIN NHAX"/>
    <property type="match status" value="1"/>
</dbReference>
<dbReference type="PANTHER" id="PTHR46268:SF6">
    <property type="entry name" value="UNIVERSAL STRESS PROTEIN UP12"/>
    <property type="match status" value="1"/>
</dbReference>
<dbReference type="Pfam" id="PF00582">
    <property type="entry name" value="Usp"/>
    <property type="match status" value="1"/>
</dbReference>
<dbReference type="PRINTS" id="PR01438">
    <property type="entry name" value="UNVRSLSTRESS"/>
</dbReference>
<dbReference type="SUPFAM" id="SSF52402">
    <property type="entry name" value="Adenine nucleotide alpha hydrolases-like"/>
    <property type="match status" value="2"/>
</dbReference>
<name>Y2028_MYCTO</name>
<accession>P9WFD8</accession>
<accession>L0T9Z1</accession>
<accession>O53474</accession>
<accession>Q7D7L5</accession>
<proteinExistence type="evidence at transcript level"/>
<evidence type="ECO:0000269" key="1">
    <source>
    </source>
</evidence>
<evidence type="ECO:0000305" key="2"/>
<sequence>MNQSHKPPSIVVGIDGSKPAVQAALWAVDEAASRDIPLRLLYAIEPDDPGYAAHGAAARKLAAAENAVRYAFTAVEAADRPVKVEVEITQERPVTSLIRASAAAALVCVGAIGVHHFRPERVGSTAAALALSAQCPVAIVRPHRVPIGRDAAWIVVEADGSSDIGVLLGAVMAEARLRDSPVRVVTCRQSGVGDTGDDVRASLDRWLARWQPRYPDVRVQSAAVHGELLDYLAGLGRSVHMVVLSASDQEHVEQLVGAPGNAVLQEAGCTLLVVGQQYL</sequence>
<reference key="1">
    <citation type="journal article" date="2002" name="J. Bacteriol.">
        <title>Whole-genome comparison of Mycobacterium tuberculosis clinical and laboratory strains.</title>
        <authorList>
            <person name="Fleischmann R.D."/>
            <person name="Alland D."/>
            <person name="Eisen J.A."/>
            <person name="Carpenter L."/>
            <person name="White O."/>
            <person name="Peterson J.D."/>
            <person name="DeBoy R.T."/>
            <person name="Dodson R.J."/>
            <person name="Gwinn M.L."/>
            <person name="Haft D.H."/>
            <person name="Hickey E.K."/>
            <person name="Kolonay J.F."/>
            <person name="Nelson W.C."/>
            <person name="Umayam L.A."/>
            <person name="Ermolaeva M.D."/>
            <person name="Salzberg S.L."/>
            <person name="Delcher A."/>
            <person name="Utterback T.R."/>
            <person name="Weidman J.F."/>
            <person name="Khouri H.M."/>
            <person name="Gill J."/>
            <person name="Mikula A."/>
            <person name="Bishai W."/>
            <person name="Jacobs W.R. Jr."/>
            <person name="Venter J.C."/>
            <person name="Fraser C.M."/>
        </authorList>
    </citation>
    <scope>NUCLEOTIDE SEQUENCE [LARGE SCALE GENOMIC DNA]</scope>
    <source>
        <strain>CDC 1551 / Oshkosh</strain>
    </source>
</reference>
<reference key="2">
    <citation type="journal article" date="2003" name="J. Exp. Med.">
        <title>Inhibition of respiration by nitric oxide induces a Mycobacterium tuberculosis dormancy program.</title>
        <authorList>
            <person name="Voskuil M.I."/>
            <person name="Schnappinger D."/>
            <person name="Visconti K.C."/>
            <person name="Harrell M.I."/>
            <person name="Dolganov G.M."/>
            <person name="Sherman D.R."/>
            <person name="Schoolnik G.K."/>
        </authorList>
    </citation>
    <scope>INDUCTION BY NITRIC OXIDE (NO) AND BY HYPOXIA</scope>
    <scope>DORMANCY REGULON</scope>
    <source>
        <strain>CDC 1551 / Oshkosh</strain>
    </source>
</reference>
<organism>
    <name type="scientific">Mycobacterium tuberculosis (strain CDC 1551 / Oshkosh)</name>
    <dbReference type="NCBI Taxonomy" id="83331"/>
    <lineage>
        <taxon>Bacteria</taxon>
        <taxon>Bacillati</taxon>
        <taxon>Actinomycetota</taxon>
        <taxon>Actinomycetes</taxon>
        <taxon>Mycobacteriales</taxon>
        <taxon>Mycobacteriaceae</taxon>
        <taxon>Mycobacterium</taxon>
        <taxon>Mycobacterium tuberculosis complex</taxon>
    </lineage>
</organism>
<feature type="chain" id="PRO_0000428556" description="Universal stress protein MT2087">
    <location>
        <begin position="1"/>
        <end position="279"/>
    </location>
</feature>
<gene>
    <name type="ordered locus">MT2087</name>
</gene>
<comment type="induction">
    <text evidence="1">A member of the dormancy regulon. Induced in response to reduced oxygen tension (hypoxia) and low levels of nitric oxide (NO).</text>
</comment>
<comment type="similarity">
    <text evidence="2">Belongs to the universal stress protein A family.</text>
</comment>
<keyword id="KW-1185">Reference proteome</keyword>
<protein>
    <recommendedName>
        <fullName>Universal stress protein MT2087</fullName>
    </recommendedName>
</protein>